<reference key="1">
    <citation type="journal article" date="2015" name="Genome Announc.">
        <title>Draft genome sequence of the cellulolytic fungus Chaetomium globosum.</title>
        <authorList>
            <person name="Cuomo C.A."/>
            <person name="Untereiner W.A."/>
            <person name="Ma L.-J."/>
            <person name="Grabherr M."/>
            <person name="Birren B.W."/>
        </authorList>
    </citation>
    <scope>NUCLEOTIDE SEQUENCE [LARGE SCALE GENOMIC DNA]</scope>
    <source>
        <strain>ATCC 6205 / CBS 148.51 / DSM 1962 / NBRC 6347 / NRRL 1970</strain>
    </source>
</reference>
<proteinExistence type="inferred from homology"/>
<comment type="function">
    <text evidence="1">Component of the NOP7 complex, which is required for maturation of the 25S and 5.8S ribosomal RNAs and formation of the 60S ribosome.</text>
</comment>
<comment type="subunit">
    <text evidence="1">Component of the NOP7 complex, composed of ERB1, NOP7 and YTM1. The complex is held together by ERB1, which interacts with NOP7 via its N-terminal domain and with YTM1 via a high-affinity interaction between the seven-bladed beta-propeller domains of the 2 proteins. The NOP7 complex associates with the 66S pre-ribosome.</text>
</comment>
<comment type="subcellular location">
    <subcellularLocation>
        <location evidence="1">Nucleus</location>
        <location evidence="1">Nucleolus</location>
    </subcellularLocation>
    <subcellularLocation>
        <location evidence="1">Nucleus</location>
        <location evidence="1">Nucleoplasm</location>
    </subcellularLocation>
</comment>
<comment type="similarity">
    <text evidence="1">Belongs to the WD repeat BOP1/ERB1 family.</text>
</comment>
<organism>
    <name type="scientific">Chaetomium globosum (strain ATCC 6205 / CBS 148.51 / DSM 1962 / NBRC 6347 / NRRL 1970)</name>
    <name type="common">Soil fungus</name>
    <dbReference type="NCBI Taxonomy" id="306901"/>
    <lineage>
        <taxon>Eukaryota</taxon>
        <taxon>Fungi</taxon>
        <taxon>Dikarya</taxon>
        <taxon>Ascomycota</taxon>
        <taxon>Pezizomycotina</taxon>
        <taxon>Sordariomycetes</taxon>
        <taxon>Sordariomycetidae</taxon>
        <taxon>Sordariales</taxon>
        <taxon>Chaetomiaceae</taxon>
        <taxon>Chaetomium</taxon>
    </lineage>
</organism>
<protein>
    <recommendedName>
        <fullName evidence="1">Ribosome biogenesis protein ERB1</fullName>
    </recommendedName>
    <alternativeName>
        <fullName evidence="1">Eukaryotic ribosome biogenesis protein 1</fullName>
    </alternativeName>
</protein>
<accession>Q2HDW0</accession>
<sequence>MGSKITDKKRKSRDSESESDDELANGLFDGILSQSEDEEDYLPSDDDDDVEDSENEGTGASEDDDDDDDDDDILSDDIPSDVDSEEAINRLVKQQEELEITEPGVDPKREEDDGADRNYRIEKDANGGERYVYDEIDPVYDSDDSDAKGPVNTIGDIPLSFYDSYPHIGYDINGKKIMRPATGDALQSLLDSIEVPKGWTGLTDVDTGNPLNLTQDELELVRRVQMGLLPTDLQDPYPDTVEYFTSIEEKMPLSSAPEPKRRFLPSKNEAKQIMKLVRAIREGRILPYKPPEEREREEEEQEEVHFDLWQNEEPQAPNPMHIPAPKLAPPGYDLSYNPPEEYLPSKEEREEWENADPEDREKEYLPQKHNALRKVPAWGNLVKERFERCMDLYLAPRIRKNRLNIDPNSLLPKLPSPSELKPFPTVAQTIFRGHEGRVRSVSVDPTGVALATGGDDGTVRVWELLTGRQVWSVKLNSEEPVNAVRWRPTKDAFVLAAAAGEDIFLMVPTHASVTPALDQASRDILATGFGYATNGQQPAAPVSKEPAAKWARPGTKLEDEGVLIRITVRSTVKVINWHRRGDHFATVSPTGQRSSVAIHTLSKHLTQIPFRKLSGLAQTAAFHPLRPLFFVATQRTIRCYDLQKLELVKVVQPGAKWISSFDIHPGGDNLIVGSYDKRLLWHDLDLSNRPYKTMRFHGQAIRQVRYHRGGLPLFADASDDGSLQIFHGKVPNDQLENPTIVPVKMLKGHKVVSKLGVLDIDWHPREPWCVSAGADGTARLWM</sequence>
<feature type="chain" id="PRO_0000370425" description="Ribosome biogenesis protein ERB1">
    <location>
        <begin position="1"/>
        <end position="782"/>
    </location>
</feature>
<feature type="repeat" description="WD 1">
    <location>
        <begin position="433"/>
        <end position="472"/>
    </location>
</feature>
<feature type="repeat" description="WD 2">
    <location>
        <begin position="476"/>
        <end position="516"/>
    </location>
</feature>
<feature type="repeat" description="WD 3">
    <location>
        <begin position="567"/>
        <end position="609"/>
    </location>
</feature>
<feature type="repeat" description="WD 4">
    <location>
        <begin position="612"/>
        <end position="650"/>
    </location>
</feature>
<feature type="repeat" description="WD 5">
    <location>
        <begin position="653"/>
        <end position="692"/>
    </location>
</feature>
<feature type="repeat" description="WD 6">
    <location>
        <begin position="696"/>
        <end position="736"/>
    </location>
</feature>
<feature type="repeat" description="WD 7">
    <location>
        <begin position="752"/>
        <end position="782"/>
    </location>
</feature>
<feature type="region of interest" description="Disordered" evidence="2">
    <location>
        <begin position="1"/>
        <end position="123"/>
    </location>
</feature>
<feature type="region of interest" description="Disordered" evidence="2">
    <location>
        <begin position="339"/>
        <end position="361"/>
    </location>
</feature>
<feature type="compositionally biased region" description="Acidic residues" evidence="2">
    <location>
        <begin position="35"/>
        <end position="86"/>
    </location>
</feature>
<feature type="compositionally biased region" description="Basic and acidic residues" evidence="2">
    <location>
        <begin position="105"/>
        <end position="123"/>
    </location>
</feature>
<keyword id="KW-0539">Nucleus</keyword>
<keyword id="KW-1185">Reference proteome</keyword>
<keyword id="KW-0677">Repeat</keyword>
<keyword id="KW-0690">Ribosome biogenesis</keyword>
<keyword id="KW-0698">rRNA processing</keyword>
<keyword id="KW-0853">WD repeat</keyword>
<gene>
    <name evidence="1" type="primary">ERB1</name>
    <name type="ORF">CHGG_01594</name>
</gene>
<evidence type="ECO:0000255" key="1">
    <source>
        <dbReference type="HAMAP-Rule" id="MF_03027"/>
    </source>
</evidence>
<evidence type="ECO:0000256" key="2">
    <source>
        <dbReference type="SAM" id="MobiDB-lite"/>
    </source>
</evidence>
<dbReference type="EMBL" id="CH408029">
    <property type="protein sequence ID" value="EAQ93359.1"/>
    <property type="molecule type" value="Genomic_DNA"/>
</dbReference>
<dbReference type="RefSeq" id="XP_001220815.1">
    <property type="nucleotide sequence ID" value="XM_001220814.1"/>
</dbReference>
<dbReference type="SMR" id="Q2HDW0"/>
<dbReference type="FunCoup" id="Q2HDW0">
    <property type="interactions" value="897"/>
</dbReference>
<dbReference type="STRING" id="306901.Q2HDW0"/>
<dbReference type="GeneID" id="4386342"/>
<dbReference type="VEuPathDB" id="FungiDB:CHGG_01594"/>
<dbReference type="eggNOG" id="KOG0650">
    <property type="taxonomic scope" value="Eukaryota"/>
</dbReference>
<dbReference type="HOGENOM" id="CLU_011390_0_1_1"/>
<dbReference type="InParanoid" id="Q2HDW0"/>
<dbReference type="OMA" id="MRPAKGE"/>
<dbReference type="OrthoDB" id="5571054at2759"/>
<dbReference type="Proteomes" id="UP000001056">
    <property type="component" value="Unassembled WGS sequence"/>
</dbReference>
<dbReference type="GO" id="GO:0005654">
    <property type="term" value="C:nucleoplasm"/>
    <property type="evidence" value="ECO:0007669"/>
    <property type="project" value="UniProtKB-SubCell"/>
</dbReference>
<dbReference type="GO" id="GO:0070545">
    <property type="term" value="C:PeBoW complex"/>
    <property type="evidence" value="ECO:0007669"/>
    <property type="project" value="EnsemblFungi"/>
</dbReference>
<dbReference type="GO" id="GO:0030687">
    <property type="term" value="C:preribosome, large subunit precursor"/>
    <property type="evidence" value="ECO:0007669"/>
    <property type="project" value="UniProtKB-UniRule"/>
</dbReference>
<dbReference type="GO" id="GO:0070180">
    <property type="term" value="F:large ribosomal subunit rRNA binding"/>
    <property type="evidence" value="ECO:0007669"/>
    <property type="project" value="EnsemblFungi"/>
</dbReference>
<dbReference type="GO" id="GO:0043021">
    <property type="term" value="F:ribonucleoprotein complex binding"/>
    <property type="evidence" value="ECO:0007669"/>
    <property type="project" value="UniProtKB-UniRule"/>
</dbReference>
<dbReference type="GO" id="GO:0000466">
    <property type="term" value="P:maturation of 5.8S rRNA from tricistronic rRNA transcript (SSU-rRNA, 5.8S rRNA, LSU-rRNA)"/>
    <property type="evidence" value="ECO:0007669"/>
    <property type="project" value="UniProtKB-UniRule"/>
</dbReference>
<dbReference type="GO" id="GO:0000463">
    <property type="term" value="P:maturation of LSU-rRNA from tricistronic rRNA transcript (SSU-rRNA, 5.8S rRNA, LSU-rRNA)"/>
    <property type="evidence" value="ECO:0007669"/>
    <property type="project" value="UniProtKB-UniRule"/>
</dbReference>
<dbReference type="FunFam" id="2.130.10.10:FF:000061">
    <property type="entry name" value="Ribosome biogenesis protein BOP1 homolog"/>
    <property type="match status" value="1"/>
</dbReference>
<dbReference type="Gene3D" id="2.130.10.10">
    <property type="entry name" value="YVTN repeat-like/Quinoprotein amine dehydrogenase"/>
    <property type="match status" value="1"/>
</dbReference>
<dbReference type="HAMAP" id="MF_03027">
    <property type="entry name" value="BOP1"/>
    <property type="match status" value="1"/>
</dbReference>
<dbReference type="InterPro" id="IPR028598">
    <property type="entry name" value="BOP1/Erb1"/>
</dbReference>
<dbReference type="InterPro" id="IPR012953">
    <property type="entry name" value="BOP1_N_dom"/>
</dbReference>
<dbReference type="InterPro" id="IPR015943">
    <property type="entry name" value="WD40/YVTN_repeat-like_dom_sf"/>
</dbReference>
<dbReference type="InterPro" id="IPR019775">
    <property type="entry name" value="WD40_repeat_CS"/>
</dbReference>
<dbReference type="InterPro" id="IPR036322">
    <property type="entry name" value="WD40_repeat_dom_sf"/>
</dbReference>
<dbReference type="InterPro" id="IPR001680">
    <property type="entry name" value="WD40_rpt"/>
</dbReference>
<dbReference type="PANTHER" id="PTHR17605:SF0">
    <property type="entry name" value="RIBOSOME BIOGENESIS PROTEIN BOP1"/>
    <property type="match status" value="1"/>
</dbReference>
<dbReference type="PANTHER" id="PTHR17605">
    <property type="entry name" value="RIBOSOME BIOGENESIS PROTEIN BOP1 BLOCK OF PROLIFERATION 1 PROTEIN"/>
    <property type="match status" value="1"/>
</dbReference>
<dbReference type="Pfam" id="PF08145">
    <property type="entry name" value="BOP1NT"/>
    <property type="match status" value="1"/>
</dbReference>
<dbReference type="Pfam" id="PF00400">
    <property type="entry name" value="WD40"/>
    <property type="match status" value="2"/>
</dbReference>
<dbReference type="SMART" id="SM01035">
    <property type="entry name" value="BOP1NT"/>
    <property type="match status" value="1"/>
</dbReference>
<dbReference type="SMART" id="SM00320">
    <property type="entry name" value="WD40"/>
    <property type="match status" value="6"/>
</dbReference>
<dbReference type="SUPFAM" id="SSF50978">
    <property type="entry name" value="WD40 repeat-like"/>
    <property type="match status" value="1"/>
</dbReference>
<dbReference type="PROSITE" id="PS00678">
    <property type="entry name" value="WD_REPEATS_1"/>
    <property type="match status" value="1"/>
</dbReference>
<dbReference type="PROSITE" id="PS50082">
    <property type="entry name" value="WD_REPEATS_2"/>
    <property type="match status" value="2"/>
</dbReference>
<dbReference type="PROSITE" id="PS50294">
    <property type="entry name" value="WD_REPEATS_REGION"/>
    <property type="match status" value="1"/>
</dbReference>
<name>ERB1_CHAGB</name>